<gene>
    <name evidence="1" type="primary">purK</name>
    <name type="ordered locus">HI_1616</name>
</gene>
<sequence>MQNSTLYPTVYVLGNGQLGRMLRYAGAPLDIYVEPLAFNAPVFDLPENAIITAEIERWEKTPLTELLGNHKNFVNQHIFGLLADRFTQKSLLDELNLSTSPWCLLKDKNQWNDLFQTVGEKVVVKRRTGGYDGRGQWIIRDENRADITDDLFGEVIAEKFIPFDYEVSIVGARFKNGEKRFYPVTHNLQQNGILRYSVVDCAFPQQSVQQKQAETMLGKIMDKLGYVGVMAMECFVVGDKLLINELAPRVHNSGHWTQLGCSISQFELHLRALLNLPTPELQTFAPSVMINLIGTNHNPKWLNIPFAQLHWYGKEVRIGRKVGHINLSHPNKAVIIQQLEKLCTELPEDYQSGLNWAIEKLK</sequence>
<feature type="chain" id="PRO_0000074998" description="N5-carboxyaminoimidazole ribonucleotide synthase">
    <location>
        <begin position="1"/>
        <end position="362"/>
    </location>
</feature>
<feature type="domain" description="ATP-grasp" evidence="1">
    <location>
        <begin position="89"/>
        <end position="274"/>
    </location>
</feature>
<feature type="binding site" evidence="1">
    <location>
        <position position="85"/>
    </location>
    <ligand>
        <name>ATP</name>
        <dbReference type="ChEBI" id="CHEBI:30616"/>
    </ligand>
</feature>
<feature type="binding site" evidence="1">
    <location>
        <position position="125"/>
    </location>
    <ligand>
        <name>ATP</name>
        <dbReference type="ChEBI" id="CHEBI:30616"/>
    </ligand>
</feature>
<feature type="binding site" evidence="1">
    <location>
        <begin position="130"/>
        <end position="136"/>
    </location>
    <ligand>
        <name>ATP</name>
        <dbReference type="ChEBI" id="CHEBI:30616"/>
    </ligand>
</feature>
<feature type="binding site" evidence="1">
    <location>
        <begin position="158"/>
        <end position="161"/>
    </location>
    <ligand>
        <name>ATP</name>
        <dbReference type="ChEBI" id="CHEBI:30616"/>
    </ligand>
</feature>
<feature type="binding site" evidence="1">
    <location>
        <position position="166"/>
    </location>
    <ligand>
        <name>ATP</name>
        <dbReference type="ChEBI" id="CHEBI:30616"/>
    </ligand>
</feature>
<feature type="binding site" evidence="1">
    <location>
        <begin position="244"/>
        <end position="245"/>
    </location>
    <ligand>
        <name>ATP</name>
        <dbReference type="ChEBI" id="CHEBI:30616"/>
    </ligand>
</feature>
<name>PURK_HAEIN</name>
<comment type="function">
    <text evidence="1">Catalyzes the ATP-dependent conversion of 5-aminoimidazole ribonucleotide (AIR) and HCO(3)(-) to N5-carboxyaminoimidazole ribonucleotide (N5-CAIR).</text>
</comment>
<comment type="catalytic activity">
    <reaction evidence="1">
        <text>5-amino-1-(5-phospho-beta-D-ribosyl)imidazole + hydrogencarbonate + ATP = 5-carboxyamino-1-(5-phospho-D-ribosyl)imidazole + ADP + phosphate + 2 H(+)</text>
        <dbReference type="Rhea" id="RHEA:19317"/>
        <dbReference type="ChEBI" id="CHEBI:15378"/>
        <dbReference type="ChEBI" id="CHEBI:17544"/>
        <dbReference type="ChEBI" id="CHEBI:30616"/>
        <dbReference type="ChEBI" id="CHEBI:43474"/>
        <dbReference type="ChEBI" id="CHEBI:58730"/>
        <dbReference type="ChEBI" id="CHEBI:137981"/>
        <dbReference type="ChEBI" id="CHEBI:456216"/>
        <dbReference type="EC" id="6.3.4.18"/>
    </reaction>
</comment>
<comment type="pathway">
    <text evidence="1">Purine metabolism; IMP biosynthesis via de novo pathway; 5-amino-1-(5-phospho-D-ribosyl)imidazole-4-carboxylate from 5-amino-1-(5-phospho-D-ribosyl)imidazole (N5-CAIR route): step 1/2.</text>
</comment>
<comment type="subunit">
    <text evidence="1">Homodimer.</text>
</comment>
<comment type="similarity">
    <text evidence="1">Belongs to the PurK/PurT family.</text>
</comment>
<proteinExistence type="inferred from homology"/>
<evidence type="ECO:0000255" key="1">
    <source>
        <dbReference type="HAMAP-Rule" id="MF_01928"/>
    </source>
</evidence>
<reference key="1">
    <citation type="journal article" date="1995" name="Science">
        <title>Whole-genome random sequencing and assembly of Haemophilus influenzae Rd.</title>
        <authorList>
            <person name="Fleischmann R.D."/>
            <person name="Adams M.D."/>
            <person name="White O."/>
            <person name="Clayton R.A."/>
            <person name="Kirkness E.F."/>
            <person name="Kerlavage A.R."/>
            <person name="Bult C.J."/>
            <person name="Tomb J.-F."/>
            <person name="Dougherty B.A."/>
            <person name="Merrick J.M."/>
            <person name="McKenney K."/>
            <person name="Sutton G.G."/>
            <person name="FitzHugh W."/>
            <person name="Fields C.A."/>
            <person name="Gocayne J.D."/>
            <person name="Scott J.D."/>
            <person name="Shirley R."/>
            <person name="Liu L.-I."/>
            <person name="Glodek A."/>
            <person name="Kelley J.M."/>
            <person name="Weidman J.F."/>
            <person name="Phillips C.A."/>
            <person name="Spriggs T."/>
            <person name="Hedblom E."/>
            <person name="Cotton M.D."/>
            <person name="Utterback T.R."/>
            <person name="Hanna M.C."/>
            <person name="Nguyen D.T."/>
            <person name="Saudek D.M."/>
            <person name="Brandon R.C."/>
            <person name="Fine L.D."/>
            <person name="Fritchman J.L."/>
            <person name="Fuhrmann J.L."/>
            <person name="Geoghagen N.S.M."/>
            <person name="Gnehm C.L."/>
            <person name="McDonald L.A."/>
            <person name="Small K.V."/>
            <person name="Fraser C.M."/>
            <person name="Smith H.O."/>
            <person name="Venter J.C."/>
        </authorList>
    </citation>
    <scope>NUCLEOTIDE SEQUENCE [LARGE SCALE GENOMIC DNA]</scope>
    <source>
        <strain>ATCC 51907 / DSM 11121 / KW20 / Rd</strain>
    </source>
</reference>
<keyword id="KW-0067">ATP-binding</keyword>
<keyword id="KW-0436">Ligase</keyword>
<keyword id="KW-0547">Nucleotide-binding</keyword>
<keyword id="KW-0658">Purine biosynthesis</keyword>
<keyword id="KW-1185">Reference proteome</keyword>
<accession>P43850</accession>
<protein>
    <recommendedName>
        <fullName evidence="1">N5-carboxyaminoimidazole ribonucleotide synthase</fullName>
        <shortName evidence="1">N5-CAIR synthase</shortName>
        <ecNumber evidence="1">6.3.4.18</ecNumber>
    </recommendedName>
    <alternativeName>
        <fullName evidence="1">5-(carboxyamino)imidazole ribonucleotide synthetase</fullName>
    </alternativeName>
</protein>
<organism>
    <name type="scientific">Haemophilus influenzae (strain ATCC 51907 / DSM 11121 / KW20 / Rd)</name>
    <dbReference type="NCBI Taxonomy" id="71421"/>
    <lineage>
        <taxon>Bacteria</taxon>
        <taxon>Pseudomonadati</taxon>
        <taxon>Pseudomonadota</taxon>
        <taxon>Gammaproteobacteria</taxon>
        <taxon>Pasteurellales</taxon>
        <taxon>Pasteurellaceae</taxon>
        <taxon>Haemophilus</taxon>
    </lineage>
</organism>
<dbReference type="EC" id="6.3.4.18" evidence="1"/>
<dbReference type="EMBL" id="L42023">
    <property type="protein sequence ID" value="AAC23264.1"/>
    <property type="molecule type" value="Genomic_DNA"/>
</dbReference>
<dbReference type="PIR" id="H64132">
    <property type="entry name" value="H64132"/>
</dbReference>
<dbReference type="RefSeq" id="NP_439758.1">
    <property type="nucleotide sequence ID" value="NC_000907.1"/>
</dbReference>
<dbReference type="SMR" id="P43850"/>
<dbReference type="STRING" id="71421.HI_1616"/>
<dbReference type="EnsemblBacteria" id="AAC23264">
    <property type="protein sequence ID" value="AAC23264"/>
    <property type="gene ID" value="HI_1616"/>
</dbReference>
<dbReference type="KEGG" id="hin:HI_1616"/>
<dbReference type="PATRIC" id="fig|71421.8.peg.1689"/>
<dbReference type="eggNOG" id="COG0026">
    <property type="taxonomic scope" value="Bacteria"/>
</dbReference>
<dbReference type="HOGENOM" id="CLU_011534_0_0_6"/>
<dbReference type="OrthoDB" id="9804625at2"/>
<dbReference type="PhylomeDB" id="P43850"/>
<dbReference type="BioCyc" id="HINF71421:G1GJ1-1629-MONOMER"/>
<dbReference type="UniPathway" id="UPA00074">
    <property type="reaction ID" value="UER00942"/>
</dbReference>
<dbReference type="Proteomes" id="UP000000579">
    <property type="component" value="Chromosome"/>
</dbReference>
<dbReference type="GO" id="GO:0005829">
    <property type="term" value="C:cytosol"/>
    <property type="evidence" value="ECO:0000318"/>
    <property type="project" value="GO_Central"/>
</dbReference>
<dbReference type="GO" id="GO:0034028">
    <property type="term" value="F:5-(carboxyamino)imidazole ribonucleotide synthase activity"/>
    <property type="evidence" value="ECO:0007669"/>
    <property type="project" value="UniProtKB-UniRule"/>
</dbReference>
<dbReference type="GO" id="GO:0005524">
    <property type="term" value="F:ATP binding"/>
    <property type="evidence" value="ECO:0007669"/>
    <property type="project" value="UniProtKB-KW"/>
</dbReference>
<dbReference type="GO" id="GO:0046872">
    <property type="term" value="F:metal ion binding"/>
    <property type="evidence" value="ECO:0007669"/>
    <property type="project" value="InterPro"/>
</dbReference>
<dbReference type="GO" id="GO:0004638">
    <property type="term" value="F:phosphoribosylaminoimidazole carboxylase activity"/>
    <property type="evidence" value="ECO:0007669"/>
    <property type="project" value="InterPro"/>
</dbReference>
<dbReference type="GO" id="GO:0006189">
    <property type="term" value="P:'de novo' IMP biosynthetic process"/>
    <property type="evidence" value="ECO:0007669"/>
    <property type="project" value="UniProtKB-UniRule"/>
</dbReference>
<dbReference type="Gene3D" id="3.40.50.20">
    <property type="match status" value="1"/>
</dbReference>
<dbReference type="Gene3D" id="3.30.1490.20">
    <property type="entry name" value="ATP-grasp fold, A domain"/>
    <property type="match status" value="1"/>
</dbReference>
<dbReference type="Gene3D" id="3.30.470.20">
    <property type="entry name" value="ATP-grasp fold, B domain"/>
    <property type="match status" value="1"/>
</dbReference>
<dbReference type="HAMAP" id="MF_01928">
    <property type="entry name" value="PurK"/>
    <property type="match status" value="1"/>
</dbReference>
<dbReference type="InterPro" id="IPR011761">
    <property type="entry name" value="ATP-grasp"/>
</dbReference>
<dbReference type="InterPro" id="IPR003135">
    <property type="entry name" value="ATP-grasp_carboxylate-amine"/>
</dbReference>
<dbReference type="InterPro" id="IPR013815">
    <property type="entry name" value="ATP_grasp_subdomain_1"/>
</dbReference>
<dbReference type="InterPro" id="IPR016185">
    <property type="entry name" value="PreATP-grasp_dom_sf"/>
</dbReference>
<dbReference type="InterPro" id="IPR005875">
    <property type="entry name" value="PurK"/>
</dbReference>
<dbReference type="InterPro" id="IPR040686">
    <property type="entry name" value="PurK_C"/>
</dbReference>
<dbReference type="InterPro" id="IPR011054">
    <property type="entry name" value="Rudment_hybrid_motif"/>
</dbReference>
<dbReference type="NCBIfam" id="NF004678">
    <property type="entry name" value="PRK06019.1-4"/>
    <property type="match status" value="1"/>
</dbReference>
<dbReference type="NCBIfam" id="TIGR01161">
    <property type="entry name" value="purK"/>
    <property type="match status" value="1"/>
</dbReference>
<dbReference type="PANTHER" id="PTHR11609:SF5">
    <property type="entry name" value="PHOSPHORIBOSYLAMINOIMIDAZOLE CARBOXYLASE"/>
    <property type="match status" value="1"/>
</dbReference>
<dbReference type="PANTHER" id="PTHR11609">
    <property type="entry name" value="PURINE BIOSYNTHESIS PROTEIN 6/7, PUR6/7"/>
    <property type="match status" value="1"/>
</dbReference>
<dbReference type="Pfam" id="PF02222">
    <property type="entry name" value="ATP-grasp"/>
    <property type="match status" value="1"/>
</dbReference>
<dbReference type="Pfam" id="PF17769">
    <property type="entry name" value="PurK_C"/>
    <property type="match status" value="1"/>
</dbReference>
<dbReference type="SUPFAM" id="SSF56059">
    <property type="entry name" value="Glutathione synthetase ATP-binding domain-like"/>
    <property type="match status" value="1"/>
</dbReference>
<dbReference type="SUPFAM" id="SSF52440">
    <property type="entry name" value="PreATP-grasp domain"/>
    <property type="match status" value="1"/>
</dbReference>
<dbReference type="SUPFAM" id="SSF51246">
    <property type="entry name" value="Rudiment single hybrid motif"/>
    <property type="match status" value="1"/>
</dbReference>
<dbReference type="PROSITE" id="PS50975">
    <property type="entry name" value="ATP_GRASP"/>
    <property type="match status" value="1"/>
</dbReference>